<proteinExistence type="inferred from homology"/>
<sequence>MPTFKLVLSDPMSGKARQFEVKDPLAQRFIGLKIGDELDGQVLKELIELPKGAKVKITGGSGIEGAPMHPGIPGPVKRYVLADSRPGYHPPKRGMKKKKLMRGNTISDTIVQINAVVVYPEGYAGPPAIPLGAKELQKEKKTEEAPAQ</sequence>
<dbReference type="EMBL" id="CP001014">
    <property type="protein sequence ID" value="ACB39557.1"/>
    <property type="molecule type" value="Genomic_DNA"/>
</dbReference>
<dbReference type="RefSeq" id="WP_012349977.1">
    <property type="nucleotide sequence ID" value="NC_010525.1"/>
</dbReference>
<dbReference type="SMR" id="B1YCP4"/>
<dbReference type="STRING" id="444157.Tneu_0618"/>
<dbReference type="GeneID" id="6166299"/>
<dbReference type="KEGG" id="tne:Tneu_0618"/>
<dbReference type="eggNOG" id="arCOG01946">
    <property type="taxonomic scope" value="Archaea"/>
</dbReference>
<dbReference type="HOGENOM" id="CLU_109671_1_1_2"/>
<dbReference type="OrthoDB" id="7793at2157"/>
<dbReference type="Proteomes" id="UP000001694">
    <property type="component" value="Chromosome"/>
</dbReference>
<dbReference type="GO" id="GO:1990904">
    <property type="term" value="C:ribonucleoprotein complex"/>
    <property type="evidence" value="ECO:0007669"/>
    <property type="project" value="UniProtKB-KW"/>
</dbReference>
<dbReference type="GO" id="GO:0005840">
    <property type="term" value="C:ribosome"/>
    <property type="evidence" value="ECO:0007669"/>
    <property type="project" value="UniProtKB-KW"/>
</dbReference>
<dbReference type="GO" id="GO:0003735">
    <property type="term" value="F:structural constituent of ribosome"/>
    <property type="evidence" value="ECO:0007669"/>
    <property type="project" value="InterPro"/>
</dbReference>
<dbReference type="GO" id="GO:0006412">
    <property type="term" value="P:translation"/>
    <property type="evidence" value="ECO:0007669"/>
    <property type="project" value="UniProtKB-UniRule"/>
</dbReference>
<dbReference type="HAMAP" id="MF_00512">
    <property type="entry name" value="Ribosomal_eS6"/>
    <property type="match status" value="1"/>
</dbReference>
<dbReference type="InterPro" id="IPR001377">
    <property type="entry name" value="Ribosomal_eS6"/>
</dbReference>
<dbReference type="InterPro" id="IPR020924">
    <property type="entry name" value="Ribosomal_eS6_arc"/>
</dbReference>
<dbReference type="InterPro" id="IPR018282">
    <property type="entry name" value="Ribosomal_eS6_CS"/>
</dbReference>
<dbReference type="NCBIfam" id="NF003293">
    <property type="entry name" value="PRK04290.1-2"/>
    <property type="match status" value="1"/>
</dbReference>
<dbReference type="PANTHER" id="PTHR11502">
    <property type="entry name" value="40S RIBOSOMAL PROTEIN S6"/>
    <property type="match status" value="1"/>
</dbReference>
<dbReference type="Pfam" id="PF01092">
    <property type="entry name" value="Ribosomal_S6e"/>
    <property type="match status" value="1"/>
</dbReference>
<dbReference type="SMART" id="SM01405">
    <property type="entry name" value="Ribosomal_S6e"/>
    <property type="match status" value="1"/>
</dbReference>
<dbReference type="PROSITE" id="PS00578">
    <property type="entry name" value="RIBOSOMAL_S6E"/>
    <property type="match status" value="1"/>
</dbReference>
<gene>
    <name evidence="1" type="primary">rps6e</name>
    <name type="ordered locus">Tneu_0618</name>
</gene>
<keyword id="KW-0687">Ribonucleoprotein</keyword>
<keyword id="KW-0689">Ribosomal protein</keyword>
<feature type="chain" id="PRO_1000127264" description="Small ribosomal subunit protein eS6">
    <location>
        <begin position="1"/>
        <end position="148"/>
    </location>
</feature>
<protein>
    <recommendedName>
        <fullName evidence="1">Small ribosomal subunit protein eS6</fullName>
    </recommendedName>
    <alternativeName>
        <fullName evidence="2">30S ribosomal protein S6e</fullName>
    </alternativeName>
</protein>
<name>RS6E_PYRNV</name>
<reference key="1">
    <citation type="submission" date="2008-03" db="EMBL/GenBank/DDBJ databases">
        <title>Complete sequence of Thermoproteus neutrophilus V24Sta.</title>
        <authorList>
            <consortium name="US DOE Joint Genome Institute"/>
            <person name="Copeland A."/>
            <person name="Lucas S."/>
            <person name="Lapidus A."/>
            <person name="Glavina del Rio T."/>
            <person name="Dalin E."/>
            <person name="Tice H."/>
            <person name="Bruce D."/>
            <person name="Goodwin L."/>
            <person name="Pitluck S."/>
            <person name="Sims D."/>
            <person name="Brettin T."/>
            <person name="Detter J.C."/>
            <person name="Han C."/>
            <person name="Kuske C.R."/>
            <person name="Schmutz J."/>
            <person name="Larimer F."/>
            <person name="Land M."/>
            <person name="Hauser L."/>
            <person name="Kyrpides N."/>
            <person name="Mikhailova N."/>
            <person name="Biddle J.F."/>
            <person name="Zhang Z."/>
            <person name="Fitz-Gibbon S.T."/>
            <person name="Lowe T.M."/>
            <person name="Saltikov C."/>
            <person name="House C.H."/>
            <person name="Richardson P."/>
        </authorList>
    </citation>
    <scope>NUCLEOTIDE SEQUENCE [LARGE SCALE GENOMIC DNA]</scope>
    <source>
        <strain>DSM 2338 / JCM 9278 / NBRC 100436 / V24Sta</strain>
    </source>
</reference>
<evidence type="ECO:0000255" key="1">
    <source>
        <dbReference type="HAMAP-Rule" id="MF_00512"/>
    </source>
</evidence>
<evidence type="ECO:0000305" key="2"/>
<organism>
    <name type="scientific">Pyrobaculum neutrophilum (strain DSM 2338 / JCM 9278 / NBRC 100436 / V24Sta)</name>
    <name type="common">Thermoproteus neutrophilus</name>
    <dbReference type="NCBI Taxonomy" id="444157"/>
    <lineage>
        <taxon>Archaea</taxon>
        <taxon>Thermoproteota</taxon>
        <taxon>Thermoprotei</taxon>
        <taxon>Thermoproteales</taxon>
        <taxon>Thermoproteaceae</taxon>
        <taxon>Pyrobaculum</taxon>
    </lineage>
</organism>
<comment type="similarity">
    <text evidence="1">Belongs to the eukaryotic ribosomal protein eS6 family.</text>
</comment>
<accession>B1YCP4</accession>